<name>PRMA_XYLFT</name>
<dbReference type="EC" id="2.1.1.-" evidence="1"/>
<dbReference type="EMBL" id="AE009442">
    <property type="protein sequence ID" value="AAO29100.1"/>
    <property type="status" value="ALT_INIT"/>
    <property type="molecule type" value="Genomic_DNA"/>
</dbReference>
<dbReference type="RefSeq" id="WP_004088330.1">
    <property type="nucleotide sequence ID" value="NC_004556.1"/>
</dbReference>
<dbReference type="SMR" id="Q87C45"/>
<dbReference type="KEGG" id="xft:PD_1251"/>
<dbReference type="HOGENOM" id="CLU_049382_4_1_6"/>
<dbReference type="Proteomes" id="UP000002516">
    <property type="component" value="Chromosome"/>
</dbReference>
<dbReference type="GO" id="GO:0005829">
    <property type="term" value="C:cytosol"/>
    <property type="evidence" value="ECO:0007669"/>
    <property type="project" value="TreeGrafter"/>
</dbReference>
<dbReference type="GO" id="GO:0016279">
    <property type="term" value="F:protein-lysine N-methyltransferase activity"/>
    <property type="evidence" value="ECO:0007669"/>
    <property type="project" value="TreeGrafter"/>
</dbReference>
<dbReference type="GO" id="GO:0032259">
    <property type="term" value="P:methylation"/>
    <property type="evidence" value="ECO:0007669"/>
    <property type="project" value="UniProtKB-KW"/>
</dbReference>
<dbReference type="Gene3D" id="3.40.50.150">
    <property type="entry name" value="Vaccinia Virus protein VP39"/>
    <property type="match status" value="1"/>
</dbReference>
<dbReference type="HAMAP" id="MF_00735">
    <property type="entry name" value="Methyltr_PrmA"/>
    <property type="match status" value="1"/>
</dbReference>
<dbReference type="InterPro" id="IPR050078">
    <property type="entry name" value="Ribosomal_L11_MeTrfase_PrmA"/>
</dbReference>
<dbReference type="InterPro" id="IPR004498">
    <property type="entry name" value="Ribosomal_PrmA_MeTrfase"/>
</dbReference>
<dbReference type="InterPro" id="IPR029063">
    <property type="entry name" value="SAM-dependent_MTases_sf"/>
</dbReference>
<dbReference type="NCBIfam" id="TIGR00406">
    <property type="entry name" value="prmA"/>
    <property type="match status" value="1"/>
</dbReference>
<dbReference type="PANTHER" id="PTHR43648">
    <property type="entry name" value="ELECTRON TRANSFER FLAVOPROTEIN BETA SUBUNIT LYSINE METHYLTRANSFERASE"/>
    <property type="match status" value="1"/>
</dbReference>
<dbReference type="PANTHER" id="PTHR43648:SF1">
    <property type="entry name" value="ELECTRON TRANSFER FLAVOPROTEIN BETA SUBUNIT LYSINE METHYLTRANSFERASE"/>
    <property type="match status" value="1"/>
</dbReference>
<dbReference type="Pfam" id="PF06325">
    <property type="entry name" value="PrmA"/>
    <property type="match status" value="1"/>
</dbReference>
<dbReference type="PIRSF" id="PIRSF000401">
    <property type="entry name" value="RPL11_MTase"/>
    <property type="match status" value="1"/>
</dbReference>
<dbReference type="SUPFAM" id="SSF53335">
    <property type="entry name" value="S-adenosyl-L-methionine-dependent methyltransferases"/>
    <property type="match status" value="1"/>
</dbReference>
<feature type="chain" id="PRO_0000192338" description="Ribosomal protein L11 methyltransferase">
    <location>
        <begin position="1"/>
        <end position="306"/>
    </location>
</feature>
<feature type="binding site" evidence="1">
    <location>
        <position position="154"/>
    </location>
    <ligand>
        <name>S-adenosyl-L-methionine</name>
        <dbReference type="ChEBI" id="CHEBI:59789"/>
    </ligand>
</feature>
<feature type="binding site" evidence="1">
    <location>
        <position position="179"/>
    </location>
    <ligand>
        <name>S-adenosyl-L-methionine</name>
        <dbReference type="ChEBI" id="CHEBI:59789"/>
    </ligand>
</feature>
<feature type="binding site" evidence="1">
    <location>
        <position position="201"/>
    </location>
    <ligand>
        <name>S-adenosyl-L-methionine</name>
        <dbReference type="ChEBI" id="CHEBI:59789"/>
    </ligand>
</feature>
<feature type="binding site" evidence="1">
    <location>
        <position position="242"/>
    </location>
    <ligand>
        <name>S-adenosyl-L-methionine</name>
        <dbReference type="ChEBI" id="CHEBI:59789"/>
    </ligand>
</feature>
<protein>
    <recommendedName>
        <fullName evidence="1">Ribosomal protein L11 methyltransferase</fullName>
        <shortName evidence="1">L11 Mtase</shortName>
        <ecNumber evidence="1">2.1.1.-</ecNumber>
    </recommendedName>
</protein>
<gene>
    <name evidence="1" type="primary">prmA</name>
    <name type="ordered locus">PD_1251</name>
</gene>
<proteinExistence type="inferred from homology"/>
<organism>
    <name type="scientific">Xylella fastidiosa (strain Temecula1 / ATCC 700964)</name>
    <dbReference type="NCBI Taxonomy" id="183190"/>
    <lineage>
        <taxon>Bacteria</taxon>
        <taxon>Pseudomonadati</taxon>
        <taxon>Pseudomonadota</taxon>
        <taxon>Gammaproteobacteria</taxon>
        <taxon>Lysobacterales</taxon>
        <taxon>Lysobacteraceae</taxon>
        <taxon>Xylella</taxon>
    </lineage>
</organism>
<comment type="function">
    <text evidence="1">Methylates ribosomal protein L11.</text>
</comment>
<comment type="catalytic activity">
    <reaction evidence="1">
        <text>L-lysyl-[protein] + 3 S-adenosyl-L-methionine = N(6),N(6),N(6)-trimethyl-L-lysyl-[protein] + 3 S-adenosyl-L-homocysteine + 3 H(+)</text>
        <dbReference type="Rhea" id="RHEA:54192"/>
        <dbReference type="Rhea" id="RHEA-COMP:9752"/>
        <dbReference type="Rhea" id="RHEA-COMP:13826"/>
        <dbReference type="ChEBI" id="CHEBI:15378"/>
        <dbReference type="ChEBI" id="CHEBI:29969"/>
        <dbReference type="ChEBI" id="CHEBI:57856"/>
        <dbReference type="ChEBI" id="CHEBI:59789"/>
        <dbReference type="ChEBI" id="CHEBI:61961"/>
    </reaction>
</comment>
<comment type="subcellular location">
    <subcellularLocation>
        <location evidence="1">Cytoplasm</location>
    </subcellularLocation>
</comment>
<comment type="similarity">
    <text evidence="1">Belongs to the methyltransferase superfamily. PrmA family.</text>
</comment>
<comment type="sequence caution" evidence="2">
    <conflict type="erroneous initiation">
        <sequence resource="EMBL-CDS" id="AAO29100"/>
    </conflict>
</comment>
<sequence length="306" mass="33030">MAFLEVSVQCQERSQARYEEVLESFGALAVTLLDADADTVRERGVFEPGVGETVLWDVVVLSALFPVETDALGLLAGLEGAEPGLDWGGVRFRVVVDEDWERVWMDQFQAMRFGERTFIVPWNQAVPVEASGMDAAVVRLDPGLAFGSGTHPTTGLCLRWLDRLGGDGVLGGGDVLDFGCGSGILALAALKLGAVYAVGVDNDPQALLASRENALRNRVAERLEVYLPAEAPVRRYPVVVANILASTLVALAERLAGYVAPGGRLALSGILRGEEEEVLRCYAVWLDVLGCEEEDGWIRIDGVRRC</sequence>
<evidence type="ECO:0000255" key="1">
    <source>
        <dbReference type="HAMAP-Rule" id="MF_00735"/>
    </source>
</evidence>
<evidence type="ECO:0000305" key="2"/>
<reference key="1">
    <citation type="journal article" date="2003" name="J. Bacteriol.">
        <title>Comparative analyses of the complete genome sequences of Pierce's disease and citrus variegated chlorosis strains of Xylella fastidiosa.</title>
        <authorList>
            <person name="Van Sluys M.A."/>
            <person name="de Oliveira M.C."/>
            <person name="Monteiro-Vitorello C.B."/>
            <person name="Miyaki C.Y."/>
            <person name="Furlan L.R."/>
            <person name="Camargo L.E.A."/>
            <person name="da Silva A.C.R."/>
            <person name="Moon D.H."/>
            <person name="Takita M.A."/>
            <person name="Lemos E.G.M."/>
            <person name="Machado M.A."/>
            <person name="Ferro M.I.T."/>
            <person name="da Silva F.R."/>
            <person name="Goldman M.H.S."/>
            <person name="Goldman G.H."/>
            <person name="Lemos M.V.F."/>
            <person name="El-Dorry H."/>
            <person name="Tsai S.M."/>
            <person name="Carrer H."/>
            <person name="Carraro D.M."/>
            <person name="de Oliveira R.C."/>
            <person name="Nunes L.R."/>
            <person name="Siqueira W.J."/>
            <person name="Coutinho L.L."/>
            <person name="Kimura E.T."/>
            <person name="Ferro E.S."/>
            <person name="Harakava R."/>
            <person name="Kuramae E.E."/>
            <person name="Marino C.L."/>
            <person name="Giglioti E."/>
            <person name="Abreu I.L."/>
            <person name="Alves L.M.C."/>
            <person name="do Amaral A.M."/>
            <person name="Baia G.S."/>
            <person name="Blanco S.R."/>
            <person name="Brito M.S."/>
            <person name="Cannavan F.S."/>
            <person name="Celestino A.V."/>
            <person name="da Cunha A.F."/>
            <person name="Fenille R.C."/>
            <person name="Ferro J.A."/>
            <person name="Formighieri E.F."/>
            <person name="Kishi L.T."/>
            <person name="Leoni S.G."/>
            <person name="Oliveira A.R."/>
            <person name="Rosa V.E. Jr."/>
            <person name="Sassaki F.T."/>
            <person name="Sena J.A.D."/>
            <person name="de Souza A.A."/>
            <person name="Truffi D."/>
            <person name="Tsukumo F."/>
            <person name="Yanai G.M."/>
            <person name="Zaros L.G."/>
            <person name="Civerolo E.L."/>
            <person name="Simpson A.J.G."/>
            <person name="Almeida N.F. Jr."/>
            <person name="Setubal J.C."/>
            <person name="Kitajima J.P."/>
        </authorList>
    </citation>
    <scope>NUCLEOTIDE SEQUENCE [LARGE SCALE GENOMIC DNA]</scope>
    <source>
        <strain>Temecula1 / ATCC 700964</strain>
    </source>
</reference>
<keyword id="KW-0963">Cytoplasm</keyword>
<keyword id="KW-0489">Methyltransferase</keyword>
<keyword id="KW-1185">Reference proteome</keyword>
<keyword id="KW-0949">S-adenosyl-L-methionine</keyword>
<keyword id="KW-0808">Transferase</keyword>
<accession>Q87C45</accession>